<dbReference type="EC" id="2.7.11.11"/>
<dbReference type="EMBL" id="J02626">
    <property type="protein sequence ID" value="AAA39941.1"/>
    <property type="molecule type" value="mRNA"/>
</dbReference>
<dbReference type="EMBL" id="AK048319">
    <property type="protein sequence ID" value="BAC33301.1"/>
    <property type="molecule type" value="mRNA"/>
</dbReference>
<dbReference type="EMBL" id="AK139419">
    <property type="protein sequence ID" value="BAE24005.1"/>
    <property type="molecule type" value="mRNA"/>
</dbReference>
<dbReference type="EMBL" id="AK148728">
    <property type="protein sequence ID" value="BAE28648.1"/>
    <property type="molecule type" value="mRNA"/>
</dbReference>
<dbReference type="EMBL" id="AK150122">
    <property type="protein sequence ID" value="BAE29323.1"/>
    <property type="molecule type" value="mRNA"/>
</dbReference>
<dbReference type="EMBL" id="AK150134">
    <property type="protein sequence ID" value="BAE29331.1"/>
    <property type="molecule type" value="mRNA"/>
</dbReference>
<dbReference type="EMBL" id="AK163585">
    <property type="protein sequence ID" value="BAE37407.1"/>
    <property type="molecule type" value="mRNA"/>
</dbReference>
<dbReference type="EMBL" id="BC054533">
    <property type="protein sequence ID" value="AAH54533.1"/>
    <property type="molecule type" value="mRNA"/>
</dbReference>
<dbReference type="EMBL" id="M21096">
    <property type="protein sequence ID" value="AAA39938.1"/>
    <property type="molecule type" value="Genomic_DNA"/>
</dbReference>
<dbReference type="EMBL" id="AF022239">
    <property type="status" value="NOT_ANNOTATED_CDS"/>
    <property type="molecule type" value="Genomic_DNA"/>
</dbReference>
<dbReference type="EMBL" id="X61434">
    <property type="protein sequence ID" value="CAA43676.1"/>
    <property type="molecule type" value="mRNA"/>
</dbReference>
<dbReference type="CCDS" id="CCDS17906.1">
    <molecule id="P68181-1"/>
</dbReference>
<dbReference type="CCDS" id="CCDS51090.1">
    <molecule id="P68181-2"/>
</dbReference>
<dbReference type="CCDS" id="CCDS51091.1">
    <molecule id="P68181-3"/>
</dbReference>
<dbReference type="CCDS" id="CCDS51092.1">
    <molecule id="P68181-4"/>
</dbReference>
<dbReference type="PIR" id="A24596">
    <property type="entry name" value="OKMSCB"/>
</dbReference>
<dbReference type="RefSeq" id="NP_001157670.1">
    <molecule id="P68181-2"/>
    <property type="nucleotide sequence ID" value="NM_001164198.2"/>
</dbReference>
<dbReference type="RefSeq" id="NP_001157671.1">
    <molecule id="P68181-3"/>
    <property type="nucleotide sequence ID" value="NM_001164199.2"/>
</dbReference>
<dbReference type="RefSeq" id="NP_001157672.1">
    <molecule id="P68181-4"/>
    <property type="nucleotide sequence ID" value="NM_001164200.2"/>
</dbReference>
<dbReference type="RefSeq" id="NP_035230.1">
    <molecule id="P68181-1"/>
    <property type="nucleotide sequence ID" value="NM_011100.5"/>
</dbReference>
<dbReference type="SMR" id="P68181"/>
<dbReference type="BioGRID" id="202193">
    <property type="interactions" value="49"/>
</dbReference>
<dbReference type="CORUM" id="P68181"/>
<dbReference type="FunCoup" id="P68181">
    <property type="interactions" value="4155"/>
</dbReference>
<dbReference type="IntAct" id="P68181">
    <property type="interactions" value="38"/>
</dbReference>
<dbReference type="MINT" id="P68181"/>
<dbReference type="STRING" id="10090.ENSMUSP00000005164"/>
<dbReference type="GlyGen" id="P68181">
    <property type="glycosylation" value="1 site, 1 O-linked glycan (1 site)"/>
</dbReference>
<dbReference type="iPTMnet" id="P68181"/>
<dbReference type="PhosphoSitePlus" id="P68181"/>
<dbReference type="SwissPalm" id="P68181"/>
<dbReference type="jPOST" id="P68181"/>
<dbReference type="PaxDb" id="10090-ENSMUSP00000005164"/>
<dbReference type="PeptideAtlas" id="P68181"/>
<dbReference type="ProteomicsDB" id="263389">
    <molecule id="P68181-1"/>
</dbReference>
<dbReference type="ProteomicsDB" id="263390">
    <molecule id="P68181-2"/>
</dbReference>
<dbReference type="ProteomicsDB" id="263391">
    <molecule id="P68181-3"/>
</dbReference>
<dbReference type="ProteomicsDB" id="263392">
    <molecule id="P68181-4"/>
</dbReference>
<dbReference type="Pumba" id="P68181"/>
<dbReference type="Antibodypedia" id="4160">
    <property type="antibodies" value="406 antibodies from 36 providers"/>
</dbReference>
<dbReference type="DNASU" id="18749"/>
<dbReference type="Ensembl" id="ENSMUST00000005164.12">
    <molecule id="P68181-4"/>
    <property type="protein sequence ID" value="ENSMUSP00000005164.8"/>
    <property type="gene ID" value="ENSMUSG00000005034.16"/>
</dbReference>
<dbReference type="Ensembl" id="ENSMUST00000102515.10">
    <molecule id="P68181-1"/>
    <property type="protein sequence ID" value="ENSMUSP00000099573.4"/>
    <property type="gene ID" value="ENSMUSG00000005034.16"/>
</dbReference>
<dbReference type="Ensembl" id="ENSMUST00000106137.8">
    <molecule id="P68181-2"/>
    <property type="protein sequence ID" value="ENSMUSP00000101743.2"/>
    <property type="gene ID" value="ENSMUSG00000005034.16"/>
</dbReference>
<dbReference type="Ensembl" id="ENSMUST00000106138.8">
    <molecule id="P68181-3"/>
    <property type="protein sequence ID" value="ENSMUSP00000101744.2"/>
    <property type="gene ID" value="ENSMUSG00000005034.16"/>
</dbReference>
<dbReference type="GeneID" id="18749"/>
<dbReference type="KEGG" id="mmu:18749"/>
<dbReference type="UCSC" id="uc008rrs.2">
    <molecule id="P68181-2"/>
    <property type="organism name" value="mouse"/>
</dbReference>
<dbReference type="UCSC" id="uc008rrt.2">
    <molecule id="P68181-3"/>
    <property type="organism name" value="mouse"/>
</dbReference>
<dbReference type="UCSC" id="uc008rru.1">
    <molecule id="P68181-4"/>
    <property type="organism name" value="mouse"/>
</dbReference>
<dbReference type="UCSC" id="uc008rrv.2">
    <molecule id="P68181-1"/>
    <property type="organism name" value="mouse"/>
</dbReference>
<dbReference type="AGR" id="MGI:97594"/>
<dbReference type="CTD" id="5567"/>
<dbReference type="MGI" id="MGI:97594">
    <property type="gene designation" value="Prkacb"/>
</dbReference>
<dbReference type="VEuPathDB" id="HostDB:ENSMUSG00000005034"/>
<dbReference type="eggNOG" id="KOG0616">
    <property type="taxonomic scope" value="Eukaryota"/>
</dbReference>
<dbReference type="GeneTree" id="ENSGT00940000161169"/>
<dbReference type="HOGENOM" id="CLU_000288_63_5_1"/>
<dbReference type="InParanoid" id="P68181"/>
<dbReference type="OMA" id="KHTVVKL"/>
<dbReference type="OrthoDB" id="4810at9989"/>
<dbReference type="PhylomeDB" id="P68181"/>
<dbReference type="TreeFam" id="TF313399"/>
<dbReference type="BRENDA" id="2.7.11.11">
    <property type="organism ID" value="3474"/>
</dbReference>
<dbReference type="Reactome" id="R-MMU-163615">
    <property type="pathway name" value="PKA activation"/>
</dbReference>
<dbReference type="Reactome" id="R-MMU-164378">
    <property type="pathway name" value="PKA activation in glucagon signalling"/>
</dbReference>
<dbReference type="Reactome" id="R-MMU-180024">
    <property type="pathway name" value="DARPP-32 events"/>
</dbReference>
<dbReference type="Reactome" id="R-MMU-381676">
    <property type="pathway name" value="Glucagon-like Peptide-1 (GLP1) regulates insulin secretion"/>
</dbReference>
<dbReference type="Reactome" id="R-MMU-392517">
    <property type="pathway name" value="Rap1 signalling"/>
</dbReference>
<dbReference type="Reactome" id="R-MMU-422356">
    <property type="pathway name" value="Regulation of insulin secretion"/>
</dbReference>
<dbReference type="Reactome" id="R-MMU-432040">
    <property type="pathway name" value="Vasopressin regulates renal water homeostasis via Aquaporins"/>
</dbReference>
<dbReference type="Reactome" id="R-MMU-4420097">
    <property type="pathway name" value="VEGFA-VEGFR2 Pathway"/>
</dbReference>
<dbReference type="Reactome" id="R-MMU-442720">
    <property type="pathway name" value="CREB1 phosphorylation through the activation of Adenylate Cyclase"/>
</dbReference>
<dbReference type="Reactome" id="R-MMU-5610785">
    <property type="pathway name" value="GLI3 is processed to GLI3R by the proteasome"/>
</dbReference>
<dbReference type="Reactome" id="R-MMU-5610787">
    <property type="pathway name" value="Hedgehog 'off' state"/>
</dbReference>
<dbReference type="Reactome" id="R-MMU-5621575">
    <property type="pathway name" value="CD209 (DC-SIGN) signaling"/>
</dbReference>
<dbReference type="Reactome" id="R-MMU-5687128">
    <property type="pathway name" value="MAPK6/MAPK4 signaling"/>
</dbReference>
<dbReference type="Reactome" id="R-MMU-8853659">
    <property type="pathway name" value="RET signaling"/>
</dbReference>
<dbReference type="Reactome" id="R-MMU-8963896">
    <property type="pathway name" value="HDL assembly"/>
</dbReference>
<dbReference type="Reactome" id="R-MMU-9634597">
    <property type="pathway name" value="GPER1 signaling"/>
</dbReference>
<dbReference type="Reactome" id="R-MMU-983231">
    <property type="pathway name" value="Factors involved in megakaryocyte development and platelet production"/>
</dbReference>
<dbReference type="Reactome" id="R-MMU-9856530">
    <property type="pathway name" value="High laminar flow shear stress activates signaling by PIEZO1 and PECAM1:CDH5:KDR in endothelial cells"/>
</dbReference>
<dbReference type="BioGRID-ORCS" id="18749">
    <property type="hits" value="3 hits in 82 CRISPR screens"/>
</dbReference>
<dbReference type="CD-CODE" id="CE726F99">
    <property type="entry name" value="Postsynaptic density"/>
</dbReference>
<dbReference type="ChiTaRS" id="Prkacb">
    <property type="organism name" value="mouse"/>
</dbReference>
<dbReference type="PRO" id="PR:P68181"/>
<dbReference type="Proteomes" id="UP000000589">
    <property type="component" value="Chromosome 3"/>
</dbReference>
<dbReference type="RNAct" id="P68181">
    <property type="molecule type" value="protein"/>
</dbReference>
<dbReference type="Bgee" id="ENSMUSG00000005034">
    <property type="expression patterns" value="Expressed in ventromedial nucleus of hypothalamus and 278 other cell types or tissues"/>
</dbReference>
<dbReference type="ExpressionAtlas" id="P68181">
    <property type="expression patterns" value="baseline and differential"/>
</dbReference>
<dbReference type="GO" id="GO:0005952">
    <property type="term" value="C:cAMP-dependent protein kinase complex"/>
    <property type="evidence" value="ECO:0000304"/>
    <property type="project" value="UniProtKB"/>
</dbReference>
<dbReference type="GO" id="GO:0005813">
    <property type="term" value="C:centrosome"/>
    <property type="evidence" value="ECO:0007669"/>
    <property type="project" value="Ensembl"/>
</dbReference>
<dbReference type="GO" id="GO:0097546">
    <property type="term" value="C:ciliary base"/>
    <property type="evidence" value="ECO:0000314"/>
    <property type="project" value="MGI"/>
</dbReference>
<dbReference type="GO" id="GO:0005829">
    <property type="term" value="C:cytosol"/>
    <property type="evidence" value="ECO:0000304"/>
    <property type="project" value="Reactome"/>
</dbReference>
<dbReference type="GO" id="GO:0005634">
    <property type="term" value="C:nucleus"/>
    <property type="evidence" value="ECO:0007669"/>
    <property type="project" value="UniProtKB-SubCell"/>
</dbReference>
<dbReference type="GO" id="GO:0005886">
    <property type="term" value="C:plasma membrane"/>
    <property type="evidence" value="ECO:0007669"/>
    <property type="project" value="UniProtKB-SubCell"/>
</dbReference>
<dbReference type="GO" id="GO:0005524">
    <property type="term" value="F:ATP binding"/>
    <property type="evidence" value="ECO:0000314"/>
    <property type="project" value="UniProtKB"/>
</dbReference>
<dbReference type="GO" id="GO:0004691">
    <property type="term" value="F:cAMP-dependent protein kinase activity"/>
    <property type="evidence" value="ECO:0000314"/>
    <property type="project" value="UniProtKB"/>
</dbReference>
<dbReference type="GO" id="GO:0000287">
    <property type="term" value="F:magnesium ion binding"/>
    <property type="evidence" value="ECO:0000314"/>
    <property type="project" value="UniProtKB"/>
</dbReference>
<dbReference type="GO" id="GO:0106310">
    <property type="term" value="F:protein serine kinase activity"/>
    <property type="evidence" value="ECO:0007669"/>
    <property type="project" value="RHEA"/>
</dbReference>
<dbReference type="GO" id="GO:0004674">
    <property type="term" value="F:protein serine/threonine kinase activity"/>
    <property type="evidence" value="ECO:0000304"/>
    <property type="project" value="Reactome"/>
</dbReference>
<dbReference type="GO" id="GO:0031625">
    <property type="term" value="F:ubiquitin protein ligase binding"/>
    <property type="evidence" value="ECO:0007669"/>
    <property type="project" value="Ensembl"/>
</dbReference>
<dbReference type="GO" id="GO:0007188">
    <property type="term" value="P:adenylate cyclase-modulating G protein-coupled receptor signaling pathway"/>
    <property type="evidence" value="ECO:0000304"/>
    <property type="project" value="UniProtKB"/>
</dbReference>
<dbReference type="GO" id="GO:0045879">
    <property type="term" value="P:negative regulation of smoothened signaling pathway"/>
    <property type="evidence" value="ECO:0000316"/>
    <property type="project" value="MGI"/>
</dbReference>
<dbReference type="GO" id="GO:1904262">
    <property type="term" value="P:negative regulation of TORC1 signaling"/>
    <property type="evidence" value="ECO:0000250"/>
    <property type="project" value="UniProtKB"/>
</dbReference>
<dbReference type="GO" id="GO:0001843">
    <property type="term" value="P:neural tube closure"/>
    <property type="evidence" value="ECO:0000316"/>
    <property type="project" value="MGI"/>
</dbReference>
<dbReference type="GO" id="GO:0006468">
    <property type="term" value="P:protein phosphorylation"/>
    <property type="evidence" value="ECO:0000314"/>
    <property type="project" value="UniProtKB"/>
</dbReference>
<dbReference type="GO" id="GO:0070613">
    <property type="term" value="P:regulation of protein processing"/>
    <property type="evidence" value="ECO:0000316"/>
    <property type="project" value="MGI"/>
</dbReference>
<dbReference type="CDD" id="cd14209">
    <property type="entry name" value="STKc_PKA"/>
    <property type="match status" value="1"/>
</dbReference>
<dbReference type="FunFam" id="3.30.200.20:FF:000005">
    <property type="entry name" value="cAMP-dependent protein kinase catalytic subunit"/>
    <property type="match status" value="1"/>
</dbReference>
<dbReference type="FunFam" id="1.10.510.10:FF:000005">
    <property type="entry name" value="cAMP-dependent protein kinase catalytic subunit alpha"/>
    <property type="match status" value="1"/>
</dbReference>
<dbReference type="Gene3D" id="3.30.200.20">
    <property type="entry name" value="Phosphorylase Kinase, domain 1"/>
    <property type="match status" value="1"/>
</dbReference>
<dbReference type="Gene3D" id="1.10.510.10">
    <property type="entry name" value="Transferase(Phosphotransferase) domain 1"/>
    <property type="match status" value="1"/>
</dbReference>
<dbReference type="InterPro" id="IPR000961">
    <property type="entry name" value="AGC-kinase_C"/>
</dbReference>
<dbReference type="InterPro" id="IPR011009">
    <property type="entry name" value="Kinase-like_dom_sf"/>
</dbReference>
<dbReference type="InterPro" id="IPR000719">
    <property type="entry name" value="Prot_kinase_dom"/>
</dbReference>
<dbReference type="InterPro" id="IPR017441">
    <property type="entry name" value="Protein_kinase_ATP_BS"/>
</dbReference>
<dbReference type="InterPro" id="IPR008271">
    <property type="entry name" value="Ser/Thr_kinase_AS"/>
</dbReference>
<dbReference type="InterPro" id="IPR044109">
    <property type="entry name" value="STKc_PKA"/>
</dbReference>
<dbReference type="PANTHER" id="PTHR24353:SF150">
    <property type="entry name" value="CAMP-DEPENDENT PROTEIN KINASE CATALYTIC SUBUNIT BETA"/>
    <property type="match status" value="1"/>
</dbReference>
<dbReference type="PANTHER" id="PTHR24353">
    <property type="entry name" value="CYCLIC NUCLEOTIDE-DEPENDENT PROTEIN KINASE"/>
    <property type="match status" value="1"/>
</dbReference>
<dbReference type="Pfam" id="PF00069">
    <property type="entry name" value="Pkinase"/>
    <property type="match status" value="1"/>
</dbReference>
<dbReference type="SMART" id="SM00133">
    <property type="entry name" value="S_TK_X"/>
    <property type="match status" value="1"/>
</dbReference>
<dbReference type="SMART" id="SM00220">
    <property type="entry name" value="S_TKc"/>
    <property type="match status" value="1"/>
</dbReference>
<dbReference type="SUPFAM" id="SSF56112">
    <property type="entry name" value="Protein kinase-like (PK-like)"/>
    <property type="match status" value="1"/>
</dbReference>
<dbReference type="PROSITE" id="PS51285">
    <property type="entry name" value="AGC_KINASE_CTER"/>
    <property type="match status" value="1"/>
</dbReference>
<dbReference type="PROSITE" id="PS00107">
    <property type="entry name" value="PROTEIN_KINASE_ATP"/>
    <property type="match status" value="1"/>
</dbReference>
<dbReference type="PROSITE" id="PS50011">
    <property type="entry name" value="PROTEIN_KINASE_DOM"/>
    <property type="match status" value="1"/>
</dbReference>
<dbReference type="PROSITE" id="PS00108">
    <property type="entry name" value="PROTEIN_KINASE_ST"/>
    <property type="match status" value="1"/>
</dbReference>
<proteinExistence type="evidence at protein level"/>
<gene>
    <name type="primary">Prkacb</name>
    <name type="synonym">Pkacb</name>
</gene>
<organism>
    <name type="scientific">Mus musculus</name>
    <name type="common">Mouse</name>
    <dbReference type="NCBI Taxonomy" id="10090"/>
    <lineage>
        <taxon>Eukaryota</taxon>
        <taxon>Metazoa</taxon>
        <taxon>Chordata</taxon>
        <taxon>Craniata</taxon>
        <taxon>Vertebrata</taxon>
        <taxon>Euteleostomi</taxon>
        <taxon>Mammalia</taxon>
        <taxon>Eutheria</taxon>
        <taxon>Euarchontoglires</taxon>
        <taxon>Glires</taxon>
        <taxon>Rodentia</taxon>
        <taxon>Myomorpha</taxon>
        <taxon>Muroidea</taxon>
        <taxon>Muridae</taxon>
        <taxon>Murinae</taxon>
        <taxon>Mus</taxon>
        <taxon>Mus</taxon>
    </lineage>
</organism>
<name>KAPCB_MOUSE</name>
<evidence type="ECO:0000250" key="1">
    <source>
        <dbReference type="UniProtKB" id="P05131"/>
    </source>
</evidence>
<evidence type="ECO:0000250" key="2">
    <source>
        <dbReference type="UniProtKB" id="P05132"/>
    </source>
</evidence>
<evidence type="ECO:0000250" key="3">
    <source>
        <dbReference type="UniProtKB" id="P05383"/>
    </source>
</evidence>
<evidence type="ECO:0000250" key="4">
    <source>
        <dbReference type="UniProtKB" id="P22694"/>
    </source>
</evidence>
<evidence type="ECO:0000250" key="5">
    <source>
        <dbReference type="UniProtKB" id="P68182"/>
    </source>
</evidence>
<evidence type="ECO:0000255" key="6">
    <source>
        <dbReference type="PROSITE-ProRule" id="PRU00159"/>
    </source>
</evidence>
<evidence type="ECO:0000255" key="7">
    <source>
        <dbReference type="PROSITE-ProRule" id="PRU00618"/>
    </source>
</evidence>
<evidence type="ECO:0000255" key="8">
    <source>
        <dbReference type="PROSITE-ProRule" id="PRU10027"/>
    </source>
</evidence>
<evidence type="ECO:0000269" key="9">
    <source>
    </source>
</evidence>
<evidence type="ECO:0000303" key="10">
    <source>
    </source>
</evidence>
<evidence type="ECO:0000305" key="11"/>
<evidence type="ECO:0007744" key="12">
    <source>
    </source>
</evidence>
<keyword id="KW-0025">Alternative splicing</keyword>
<keyword id="KW-0067">ATP-binding</keyword>
<keyword id="KW-0114">cAMP</keyword>
<keyword id="KW-1003">Cell membrane</keyword>
<keyword id="KW-0963">Cytoplasm</keyword>
<keyword id="KW-0418">Kinase</keyword>
<keyword id="KW-0449">Lipoprotein</keyword>
<keyword id="KW-0472">Membrane</keyword>
<keyword id="KW-0519">Myristate</keyword>
<keyword id="KW-0547">Nucleotide-binding</keyword>
<keyword id="KW-0539">Nucleus</keyword>
<keyword id="KW-0597">Phosphoprotein</keyword>
<keyword id="KW-1185">Reference proteome</keyword>
<keyword id="KW-0723">Serine/threonine-protein kinase</keyword>
<keyword id="KW-0808">Transferase</keyword>
<reference key="1">
    <citation type="journal article" date="1986" name="J. Biol. Chem.">
        <title>Evidence for a second isoform of the catalytic subunit of cAMP-dependent protein kinase.</title>
        <authorList>
            <person name="Uhler M.D."/>
            <person name="Chrivia J.C."/>
            <person name="McKnight G.S."/>
        </authorList>
    </citation>
    <scope>NUCLEOTIDE SEQUENCE [MRNA] (ISOFORM 1)</scope>
</reference>
<reference key="2">
    <citation type="journal article" date="2005" name="Science">
        <title>The transcriptional landscape of the mammalian genome.</title>
        <authorList>
            <person name="Carninci P."/>
            <person name="Kasukawa T."/>
            <person name="Katayama S."/>
            <person name="Gough J."/>
            <person name="Frith M.C."/>
            <person name="Maeda N."/>
            <person name="Oyama R."/>
            <person name="Ravasi T."/>
            <person name="Lenhard B."/>
            <person name="Wells C."/>
            <person name="Kodzius R."/>
            <person name="Shimokawa K."/>
            <person name="Bajic V.B."/>
            <person name="Brenner S.E."/>
            <person name="Batalov S."/>
            <person name="Forrest A.R."/>
            <person name="Zavolan M."/>
            <person name="Davis M.J."/>
            <person name="Wilming L.G."/>
            <person name="Aidinis V."/>
            <person name="Allen J.E."/>
            <person name="Ambesi-Impiombato A."/>
            <person name="Apweiler R."/>
            <person name="Aturaliya R.N."/>
            <person name="Bailey T.L."/>
            <person name="Bansal M."/>
            <person name="Baxter L."/>
            <person name="Beisel K.W."/>
            <person name="Bersano T."/>
            <person name="Bono H."/>
            <person name="Chalk A.M."/>
            <person name="Chiu K.P."/>
            <person name="Choudhary V."/>
            <person name="Christoffels A."/>
            <person name="Clutterbuck D.R."/>
            <person name="Crowe M.L."/>
            <person name="Dalla E."/>
            <person name="Dalrymple B.P."/>
            <person name="de Bono B."/>
            <person name="Della Gatta G."/>
            <person name="di Bernardo D."/>
            <person name="Down T."/>
            <person name="Engstrom P."/>
            <person name="Fagiolini M."/>
            <person name="Faulkner G."/>
            <person name="Fletcher C.F."/>
            <person name="Fukushima T."/>
            <person name="Furuno M."/>
            <person name="Futaki S."/>
            <person name="Gariboldi M."/>
            <person name="Georgii-Hemming P."/>
            <person name="Gingeras T.R."/>
            <person name="Gojobori T."/>
            <person name="Green R.E."/>
            <person name="Gustincich S."/>
            <person name="Harbers M."/>
            <person name="Hayashi Y."/>
            <person name="Hensch T.K."/>
            <person name="Hirokawa N."/>
            <person name="Hill D."/>
            <person name="Huminiecki L."/>
            <person name="Iacono M."/>
            <person name="Ikeo K."/>
            <person name="Iwama A."/>
            <person name="Ishikawa T."/>
            <person name="Jakt M."/>
            <person name="Kanapin A."/>
            <person name="Katoh M."/>
            <person name="Kawasawa Y."/>
            <person name="Kelso J."/>
            <person name="Kitamura H."/>
            <person name="Kitano H."/>
            <person name="Kollias G."/>
            <person name="Krishnan S.P."/>
            <person name="Kruger A."/>
            <person name="Kummerfeld S.K."/>
            <person name="Kurochkin I.V."/>
            <person name="Lareau L.F."/>
            <person name="Lazarevic D."/>
            <person name="Lipovich L."/>
            <person name="Liu J."/>
            <person name="Liuni S."/>
            <person name="McWilliam S."/>
            <person name="Madan Babu M."/>
            <person name="Madera M."/>
            <person name="Marchionni L."/>
            <person name="Matsuda H."/>
            <person name="Matsuzawa S."/>
            <person name="Miki H."/>
            <person name="Mignone F."/>
            <person name="Miyake S."/>
            <person name="Morris K."/>
            <person name="Mottagui-Tabar S."/>
            <person name="Mulder N."/>
            <person name="Nakano N."/>
            <person name="Nakauchi H."/>
            <person name="Ng P."/>
            <person name="Nilsson R."/>
            <person name="Nishiguchi S."/>
            <person name="Nishikawa S."/>
            <person name="Nori F."/>
            <person name="Ohara O."/>
            <person name="Okazaki Y."/>
            <person name="Orlando V."/>
            <person name="Pang K.C."/>
            <person name="Pavan W.J."/>
            <person name="Pavesi G."/>
            <person name="Pesole G."/>
            <person name="Petrovsky N."/>
            <person name="Piazza S."/>
            <person name="Reed J."/>
            <person name="Reid J.F."/>
            <person name="Ring B.Z."/>
            <person name="Ringwald M."/>
            <person name="Rost B."/>
            <person name="Ruan Y."/>
            <person name="Salzberg S.L."/>
            <person name="Sandelin A."/>
            <person name="Schneider C."/>
            <person name="Schoenbach C."/>
            <person name="Sekiguchi K."/>
            <person name="Semple C.A."/>
            <person name="Seno S."/>
            <person name="Sessa L."/>
            <person name="Sheng Y."/>
            <person name="Shibata Y."/>
            <person name="Shimada H."/>
            <person name="Shimada K."/>
            <person name="Silva D."/>
            <person name="Sinclair B."/>
            <person name="Sperling S."/>
            <person name="Stupka E."/>
            <person name="Sugiura K."/>
            <person name="Sultana R."/>
            <person name="Takenaka Y."/>
            <person name="Taki K."/>
            <person name="Tammoja K."/>
            <person name="Tan S.L."/>
            <person name="Tang S."/>
            <person name="Taylor M.S."/>
            <person name="Tegner J."/>
            <person name="Teichmann S.A."/>
            <person name="Ueda H.R."/>
            <person name="van Nimwegen E."/>
            <person name="Verardo R."/>
            <person name="Wei C.L."/>
            <person name="Yagi K."/>
            <person name="Yamanishi H."/>
            <person name="Zabarovsky E."/>
            <person name="Zhu S."/>
            <person name="Zimmer A."/>
            <person name="Hide W."/>
            <person name="Bult C."/>
            <person name="Grimmond S.M."/>
            <person name="Teasdale R.D."/>
            <person name="Liu E.T."/>
            <person name="Brusic V."/>
            <person name="Quackenbush J."/>
            <person name="Wahlestedt C."/>
            <person name="Mattick J.S."/>
            <person name="Hume D.A."/>
            <person name="Kai C."/>
            <person name="Sasaki D."/>
            <person name="Tomaru Y."/>
            <person name="Fukuda S."/>
            <person name="Kanamori-Katayama M."/>
            <person name="Suzuki M."/>
            <person name="Aoki J."/>
            <person name="Arakawa T."/>
            <person name="Iida J."/>
            <person name="Imamura K."/>
            <person name="Itoh M."/>
            <person name="Kato T."/>
            <person name="Kawaji H."/>
            <person name="Kawagashira N."/>
            <person name="Kawashima T."/>
            <person name="Kojima M."/>
            <person name="Kondo S."/>
            <person name="Konno H."/>
            <person name="Nakano K."/>
            <person name="Ninomiya N."/>
            <person name="Nishio T."/>
            <person name="Okada M."/>
            <person name="Plessy C."/>
            <person name="Shibata K."/>
            <person name="Shiraki T."/>
            <person name="Suzuki S."/>
            <person name="Tagami M."/>
            <person name="Waki K."/>
            <person name="Watahiki A."/>
            <person name="Okamura-Oho Y."/>
            <person name="Suzuki H."/>
            <person name="Kawai J."/>
            <person name="Hayashizaki Y."/>
        </authorList>
    </citation>
    <scope>NUCLEOTIDE SEQUENCE [LARGE SCALE MRNA] (ISOFORMS 1; 2; 3 AND 4)</scope>
    <source>
        <strain>C57BL/6J</strain>
        <tissue>Adrenal gland</tissue>
        <tissue>Head</tissue>
    </source>
</reference>
<reference key="3">
    <citation type="journal article" date="2004" name="Genome Res.">
        <title>The status, quality, and expansion of the NIH full-length cDNA project: the Mammalian Gene Collection (MGC).</title>
        <authorList>
            <consortium name="The MGC Project Team"/>
        </authorList>
    </citation>
    <scope>NUCLEOTIDE SEQUENCE [LARGE SCALE MRNA] (ISOFORM 1)</scope>
    <source>
        <strain>C57BL/6J</strain>
        <tissue>Brain</tissue>
    </source>
</reference>
<reference key="4">
    <citation type="journal article" date="1988" name="J. Biol. Chem.">
        <title>Characterization of genomic clones coding for the C alpha and C beta subunits of mouse cAMP-dependent protein kinase.</title>
        <authorList>
            <person name="Chrivia J.C."/>
            <person name="Uhler M.D."/>
            <person name="McKnight G.S."/>
        </authorList>
    </citation>
    <scope>NUCLEOTIDE SEQUENCE [GENOMIC DNA] OF 1-15 (ISOFORM 1)</scope>
</reference>
<reference key="5">
    <citation type="journal article" date="1997" name="J. Biol. Chem.">
        <title>Two novel brain-specific splice variants of the murine Cbeta gene of cAMP-dependent protein kinase.</title>
        <authorList>
            <person name="Guthrie C.R."/>
            <person name="Skalhegg B.S."/>
            <person name="McKnight G.S."/>
        </authorList>
    </citation>
    <scope>NUCLEOTIDE SEQUENCE [GENOMIC DNA] OF 1-7 (ISOFORM 2)</scope>
    <scope>NUCLEOTIDE SEQUENCE [GENOMIC DNA] OF 1-8 (ISOFORM 3)</scope>
    <scope>FUNCTION</scope>
    <scope>MYRISTOYLATION AT GLY-2</scope>
    <scope>TISSUE SPECIFICITY</scope>
</reference>
<reference key="6">
    <citation type="journal article" date="1990" name="Eur. J. Neurosci.">
        <title>A collection of cDNA clones with specific expression patterns in mouse brain.</title>
        <authorList>
            <person name="Kato K."/>
        </authorList>
    </citation>
    <scope>NUCLEOTIDE SEQUENCE [LARGE SCALE MRNA] OF 281-351</scope>
    <source>
        <strain>BALB/cJ</strain>
        <tissue>Brain</tissue>
    </source>
</reference>
<reference key="7">
    <citation type="journal article" date="2008" name="J. Proteome Res.">
        <title>Large-scale identification and evolution indexing of tyrosine phosphorylation sites from murine brain.</title>
        <authorList>
            <person name="Ballif B.A."/>
            <person name="Carey G.R."/>
            <person name="Sunyaev S.R."/>
            <person name="Gygi S.P."/>
        </authorList>
    </citation>
    <scope>PHOSPHORYLATION [LARGE SCALE ANALYSIS] AT TYR-69</scope>
    <scope>IDENTIFICATION BY MASS SPECTROMETRY [LARGE SCALE ANALYSIS]</scope>
    <source>
        <tissue>Brain</tissue>
    </source>
</reference>
<reference key="8">
    <citation type="journal article" date="2010" name="Cell">
        <title>A tissue-specific atlas of mouse protein phosphorylation and expression.</title>
        <authorList>
            <person name="Huttlin E.L."/>
            <person name="Jedrychowski M.P."/>
            <person name="Elias J.E."/>
            <person name="Goswami T."/>
            <person name="Rad R."/>
            <person name="Beausoleil S.A."/>
            <person name="Villen J."/>
            <person name="Haas W."/>
            <person name="Sowa M.E."/>
            <person name="Gygi S.P."/>
        </authorList>
    </citation>
    <scope>IDENTIFICATION BY MASS SPECTROMETRY [LARGE SCALE ANALYSIS]</scope>
    <source>
        <tissue>Brain</tissue>
        <tissue>Brown adipose tissue</tissue>
        <tissue>Kidney</tissue>
        <tissue>Liver</tissue>
        <tissue>Lung</tissue>
        <tissue>Spleen</tissue>
        <tissue>Testis</tissue>
    </source>
</reference>
<protein>
    <recommendedName>
        <fullName>cAMP-dependent protein kinase catalytic subunit beta</fullName>
        <shortName>PKA C-beta</shortName>
        <ecNumber>2.7.11.11</ecNumber>
    </recommendedName>
</protein>
<accession>P68181</accession>
<accession>P05206</accession>
<accession>Q3TQH5</accession>
<accession>Q3UDD0</accession>
<accession>Q3UTH5</accession>
<comment type="function">
    <text evidence="4 9">Mediates cAMP-dependent signaling triggered by receptor binding to GPCRs (By similarity). PKA activation regulates diverse cellular processes such as cell proliferation, the cell cycle, differentiation and regulation of microtubule dynamics, chromatin condensation and decondensation, nuclear envelope disassembly and reassembly, as well as regulation of intracellular transport mechanisms and ion flux (PubMed:9368018). Regulates the abundance of compartmentalized pools of its regulatory subunits through phosphorylation of PJA2 which binds and ubiquitinates these subunits, leading to their subsequent proteolysis (By similarity). Phosphorylates GPKOW which regulates its ability to bind RNA (By similarity). Acts as a negative regulator of mTORC1 by mediating phosphorylation of RPTOR (By similarity).</text>
</comment>
<comment type="catalytic activity">
    <reaction>
        <text>L-seryl-[protein] + ATP = O-phospho-L-seryl-[protein] + ADP + H(+)</text>
        <dbReference type="Rhea" id="RHEA:17989"/>
        <dbReference type="Rhea" id="RHEA-COMP:9863"/>
        <dbReference type="Rhea" id="RHEA-COMP:11604"/>
        <dbReference type="ChEBI" id="CHEBI:15378"/>
        <dbReference type="ChEBI" id="CHEBI:29999"/>
        <dbReference type="ChEBI" id="CHEBI:30616"/>
        <dbReference type="ChEBI" id="CHEBI:83421"/>
        <dbReference type="ChEBI" id="CHEBI:456216"/>
        <dbReference type="EC" id="2.7.11.11"/>
    </reaction>
</comment>
<comment type="catalytic activity">
    <reaction>
        <text>L-threonyl-[protein] + ATP = O-phospho-L-threonyl-[protein] + ADP + H(+)</text>
        <dbReference type="Rhea" id="RHEA:46608"/>
        <dbReference type="Rhea" id="RHEA-COMP:11060"/>
        <dbReference type="Rhea" id="RHEA-COMP:11605"/>
        <dbReference type="ChEBI" id="CHEBI:15378"/>
        <dbReference type="ChEBI" id="CHEBI:30013"/>
        <dbReference type="ChEBI" id="CHEBI:30616"/>
        <dbReference type="ChEBI" id="CHEBI:61977"/>
        <dbReference type="ChEBI" id="CHEBI:456216"/>
        <dbReference type="EC" id="2.7.11.11"/>
    </reaction>
</comment>
<comment type="cofactor">
    <cofactor>
        <name>Mg(2+)</name>
        <dbReference type="ChEBI" id="CHEBI:18420"/>
    </cofactor>
</comment>
<comment type="activity regulation">
    <text evidence="4">Activated by cAMP.</text>
</comment>
<comment type="subunit">
    <text evidence="2 4">A number of inactive tetrameric holoenzymes are produced by the combination of homo- or heterodimers of the different regulatory subunits associated with two catalytic subunits. cAMP causes the dissociation of the inactive holoenzyme into a dimer of regulatory subunits bound to four cAMP and two free monomeric catalytic subunits. Interacts with PRKAR1A and PRKAR2B (By similarity). The cAMP-dependent protein kinase catalytic subunit binds PJA2. Interacts with GPKOW.</text>
</comment>
<comment type="subcellular location">
    <subcellularLocation>
        <location evidence="4">Cytoplasm</location>
    </subcellularLocation>
    <subcellularLocation>
        <location evidence="4">Cell membrane</location>
    </subcellularLocation>
    <subcellularLocation>
        <location evidence="4">Membrane</location>
        <topology evidence="4">Lipid-anchor</topology>
    </subcellularLocation>
    <subcellularLocation>
        <location evidence="1">Nucleus</location>
    </subcellularLocation>
    <text evidence="1">Translocates into the nucleus (monomeric catalytic subunit). The inactive holoenzyme is found in the cytoplasm.</text>
</comment>
<comment type="alternative products">
    <event type="alternative splicing"/>
    <isoform>
        <id>P68181-1</id>
        <name>1</name>
        <name>Beta1</name>
        <sequence type="displayed"/>
    </isoform>
    <isoform>
        <id>P68181-2</id>
        <name>2</name>
        <name>Beta2</name>
        <sequence type="described" ref="VSP_017373 VSP_017374"/>
    </isoform>
    <isoform>
        <id>P68181-3</id>
        <name>3</name>
        <name>Beta3</name>
        <sequence type="described" ref="VSP_017372 VSP_017375"/>
    </isoform>
    <isoform>
        <id>P68181-4</id>
        <name>4</name>
        <sequence type="described" ref="VSP_017376"/>
    </isoform>
</comment>
<comment type="tissue specificity">
    <text evidence="9">Isoform 1 is found in all tissues examined, with the highest expression in the brain and very low levels in the testis. Isoform 2 is strongly expressed in the brain, in the prelimbic and insular cortex. Isoform 3 is also found only in the brain, but at very low levels.</text>
</comment>
<comment type="PTM">
    <text evidence="3">Asn-3 is partially deaminated to Asp giving rise to 2 major isoelectric variants, called CB and CA respectively.</text>
</comment>
<comment type="similarity">
    <text evidence="11">Belongs to the protein kinase superfamily. AGC Ser/Thr protein kinase family. cAMP subfamily.</text>
</comment>
<feature type="initiator methionine" description="Removed" evidence="9">
    <location>
        <position position="1"/>
    </location>
</feature>
<feature type="chain" id="PRO_0000086061" description="cAMP-dependent protein kinase catalytic subunit beta">
    <location>
        <begin position="2"/>
        <end position="351"/>
    </location>
</feature>
<feature type="domain" description="Protein kinase" evidence="6">
    <location>
        <begin position="44"/>
        <end position="298"/>
    </location>
</feature>
<feature type="domain" description="AGC-kinase C-terminal" evidence="7">
    <location>
        <begin position="299"/>
        <end position="351"/>
    </location>
</feature>
<feature type="active site" description="Proton acceptor" evidence="6 8">
    <location>
        <position position="167"/>
    </location>
</feature>
<feature type="binding site" evidence="6">
    <location>
        <begin position="50"/>
        <end position="58"/>
    </location>
    <ligand>
        <name>ATP</name>
        <dbReference type="ChEBI" id="CHEBI:30616"/>
    </ligand>
</feature>
<feature type="binding site" evidence="6">
    <location>
        <position position="73"/>
    </location>
    <ligand>
        <name>ATP</name>
        <dbReference type="ChEBI" id="CHEBI:30616"/>
    </ligand>
</feature>
<feature type="modified residue" description="Deamidated asparagine" evidence="3">
    <location>
        <position position="3"/>
    </location>
</feature>
<feature type="modified residue" description="Phosphoserine" evidence="2">
    <location>
        <position position="11"/>
    </location>
</feature>
<feature type="modified residue" description="Phosphotyrosine" evidence="12">
    <location>
        <position position="69"/>
    </location>
</feature>
<feature type="modified residue" description="Phosphoserine" evidence="2">
    <location>
        <position position="140"/>
    </location>
</feature>
<feature type="modified residue" description="Phosphothreonine" evidence="2">
    <location>
        <position position="198"/>
    </location>
</feature>
<feature type="modified residue" description="Phosphoserine" evidence="5">
    <location>
        <position position="322"/>
    </location>
</feature>
<feature type="modified residue" description="Phosphotyrosine" evidence="2">
    <location>
        <position position="331"/>
    </location>
</feature>
<feature type="modified residue" description="Phosphoserine" evidence="5">
    <location>
        <position position="339"/>
    </location>
</feature>
<feature type="lipid moiety-binding region" description="N-myristoyl glycine" evidence="9">
    <location>
        <position position="2"/>
    </location>
</feature>
<feature type="splice variant" id="VSP_017376" description="In isoform 4." evidence="10">
    <original>MGNTAIAKKGSEVESV</original>
    <variation>MAAHKELSSGQHSGTPTALQKLEGFASRLFHRHSRGTAQEHRAALEDDGLRASEHTASWDKSM</variation>
    <location>
        <begin position="1"/>
        <end position="16"/>
    </location>
</feature>
<feature type="splice variant" id="VSP_017373" description="In isoform 2." evidence="10">
    <location>
        <begin position="1"/>
        <end position="13"/>
    </location>
</feature>
<feature type="splice variant" id="VSP_017372" description="In isoform 3." evidence="10">
    <location>
        <begin position="1"/>
        <end position="12"/>
    </location>
</feature>
<feature type="splice variant" id="VSP_017375" description="In isoform 3." evidence="10">
    <original>VESV</original>
    <variation>MGLL</variation>
    <location>
        <begin position="13"/>
        <end position="16"/>
    </location>
</feature>
<feature type="splice variant" id="VSP_017374" description="In isoform 2." evidence="10">
    <original>ES</original>
    <variation>MN</variation>
    <location>
        <begin position="14"/>
        <end position="15"/>
    </location>
</feature>
<sequence length="351" mass="40708">MGNTAIAKKGSEVESVKEFLAKAKEDFLRKWENPPPSNAGLEDFERKKTLGTGSFGRVMLVKHKATEQYYAMKILDKQKVVKLKQIEHTLNEKRILQAVEFPFLVRLEYSFKDNSNLYMVMEYVPGGEMFSHLRRIGRFSEPHARFYAAQIVLTFEYLHSLDLIYRDLKPENLLIDHQGYIQVTDFGFAKRVKGRTWTLCGTPEYLAPEIILSKGYNKAVDWWALGVLIYEMAAGYPPFFADQPIQIYEKIVSGKVRFPSHFSSDLKDLLRNLLQVDLTKRFGNLKNGVSDIKTHKWFATTDWIAIYQRKVEAPFIPKFRGSGDTSNFDDYEEEEIRVSITEKCGKEFCEF</sequence>